<comment type="function">
    <text evidence="1">Involved in the oxidation of myo-inositol (MI) to 2-keto-myo-inositol (2KMI or 2-inosose).</text>
</comment>
<comment type="catalytic activity">
    <reaction evidence="1">
        <text>myo-inositol + NAD(+) = scyllo-inosose + NADH + H(+)</text>
        <dbReference type="Rhea" id="RHEA:16949"/>
        <dbReference type="ChEBI" id="CHEBI:15378"/>
        <dbReference type="ChEBI" id="CHEBI:17268"/>
        <dbReference type="ChEBI" id="CHEBI:17811"/>
        <dbReference type="ChEBI" id="CHEBI:57540"/>
        <dbReference type="ChEBI" id="CHEBI:57945"/>
        <dbReference type="EC" id="1.1.1.18"/>
    </reaction>
</comment>
<comment type="subunit">
    <text evidence="1">Homotetramer.</text>
</comment>
<comment type="similarity">
    <text evidence="1">Belongs to the Gfo/Idh/MocA family.</text>
</comment>
<protein>
    <recommendedName>
        <fullName evidence="1">Inositol 2-dehydrogenase</fullName>
        <ecNumber evidence="1">1.1.1.18</ecNumber>
    </recommendedName>
    <alternativeName>
        <fullName evidence="1">Myo-inositol 2-dehydrogenase</fullName>
        <shortName evidence="1">MI 2-dehydrogenase</shortName>
    </alternativeName>
</protein>
<evidence type="ECO:0000255" key="1">
    <source>
        <dbReference type="HAMAP-Rule" id="MF_01671"/>
    </source>
</evidence>
<name>IOLG_RENSM</name>
<sequence length="331" mass="35267">MNVAVIGAGRMGADHVRRLHESINNATVAAVVDIDLDRAKAATEGTGALAVASLAEAFAVEGVNAVLIATPGFLHEEALYQALQRDVPILCEKPMTPDAASAWRVVQAEVALGRQRIQVGFMRQFDAGYQSLKSEIEAGAAGSLLMLHCANRNASTLADFTEPMLINDSVVHEFDAIRFFTGEEITSVQVQVQVQVQVQVQVQRGKRSSLAPEGISDPQHVLIETESGILADVEIFVNARYGYEVATQAVFENGVRSIGAGEVTPSFIERFAAAYDAEVQAWVDAALHGEIGGPSAWDGYATAACCEAGVAAQRSGQRTAVVLAAKPELYR</sequence>
<feature type="chain" id="PRO_0000352585" description="Inositol 2-dehydrogenase">
    <location>
        <begin position="1"/>
        <end position="331"/>
    </location>
</feature>
<proteinExistence type="inferred from homology"/>
<organism>
    <name type="scientific">Renibacterium salmoninarum (strain ATCC 33209 / DSM 20767 / JCM 11484 / NBRC 15589 / NCIMB 2235)</name>
    <dbReference type="NCBI Taxonomy" id="288705"/>
    <lineage>
        <taxon>Bacteria</taxon>
        <taxon>Bacillati</taxon>
        <taxon>Actinomycetota</taxon>
        <taxon>Actinomycetes</taxon>
        <taxon>Micrococcales</taxon>
        <taxon>Micrococcaceae</taxon>
        <taxon>Renibacterium</taxon>
    </lineage>
</organism>
<gene>
    <name evidence="1" type="primary">iolG</name>
    <name type="ordered locus">RSal33209_0365</name>
</gene>
<accession>A9WKW2</accession>
<keyword id="KW-0520">NAD</keyword>
<keyword id="KW-0560">Oxidoreductase</keyword>
<keyword id="KW-1185">Reference proteome</keyword>
<dbReference type="EC" id="1.1.1.18" evidence="1"/>
<dbReference type="EMBL" id="CP000910">
    <property type="protein sequence ID" value="ABY22120.1"/>
    <property type="molecule type" value="Genomic_DNA"/>
</dbReference>
<dbReference type="RefSeq" id="WP_012243828.1">
    <property type="nucleotide sequence ID" value="NC_010168.1"/>
</dbReference>
<dbReference type="SMR" id="A9WKW2"/>
<dbReference type="STRING" id="288705.RSal33209_0365"/>
<dbReference type="KEGG" id="rsa:RSal33209_0365"/>
<dbReference type="eggNOG" id="COG0673">
    <property type="taxonomic scope" value="Bacteria"/>
</dbReference>
<dbReference type="HOGENOM" id="CLU_023194_0_1_11"/>
<dbReference type="Proteomes" id="UP000002007">
    <property type="component" value="Chromosome"/>
</dbReference>
<dbReference type="GO" id="GO:0050112">
    <property type="term" value="F:inositol 2-dehydrogenase (NAD+) activity"/>
    <property type="evidence" value="ECO:0007669"/>
    <property type="project" value="UniProtKB-UniRule"/>
</dbReference>
<dbReference type="GO" id="GO:0000166">
    <property type="term" value="F:nucleotide binding"/>
    <property type="evidence" value="ECO:0007669"/>
    <property type="project" value="InterPro"/>
</dbReference>
<dbReference type="GO" id="GO:0019310">
    <property type="term" value="P:inositol catabolic process"/>
    <property type="evidence" value="ECO:0007669"/>
    <property type="project" value="UniProtKB-UniRule"/>
</dbReference>
<dbReference type="Gene3D" id="3.30.360.10">
    <property type="entry name" value="Dihydrodipicolinate Reductase, domain 2"/>
    <property type="match status" value="1"/>
</dbReference>
<dbReference type="Gene3D" id="3.40.50.720">
    <property type="entry name" value="NAD(P)-binding Rossmann-like Domain"/>
    <property type="match status" value="1"/>
</dbReference>
<dbReference type="HAMAP" id="MF_01671">
    <property type="entry name" value="IolG"/>
    <property type="match status" value="1"/>
</dbReference>
<dbReference type="InterPro" id="IPR050424">
    <property type="entry name" value="Gfo-Idh-MocA_inositol_DH"/>
</dbReference>
<dbReference type="InterPro" id="IPR004104">
    <property type="entry name" value="Gfo/Idh/MocA-like_OxRdtase_C"/>
</dbReference>
<dbReference type="InterPro" id="IPR000683">
    <property type="entry name" value="Gfo/Idh/MocA-like_OxRdtase_N"/>
</dbReference>
<dbReference type="InterPro" id="IPR055170">
    <property type="entry name" value="GFO_IDH_MocA-like_dom"/>
</dbReference>
<dbReference type="InterPro" id="IPR023794">
    <property type="entry name" value="MI/DCI_dehydrogenase"/>
</dbReference>
<dbReference type="InterPro" id="IPR036291">
    <property type="entry name" value="NAD(P)-bd_dom_sf"/>
</dbReference>
<dbReference type="PANTHER" id="PTHR43593">
    <property type="match status" value="1"/>
</dbReference>
<dbReference type="PANTHER" id="PTHR43593:SF1">
    <property type="entry name" value="INOSITOL 2-DEHYDROGENASE"/>
    <property type="match status" value="1"/>
</dbReference>
<dbReference type="Pfam" id="PF01408">
    <property type="entry name" value="GFO_IDH_MocA"/>
    <property type="match status" value="1"/>
</dbReference>
<dbReference type="Pfam" id="PF02894">
    <property type="entry name" value="GFO_IDH_MocA_C"/>
    <property type="match status" value="1"/>
</dbReference>
<dbReference type="Pfam" id="PF22725">
    <property type="entry name" value="GFO_IDH_MocA_C3"/>
    <property type="match status" value="1"/>
</dbReference>
<dbReference type="SUPFAM" id="SSF55347">
    <property type="entry name" value="Glyceraldehyde-3-phosphate dehydrogenase-like, C-terminal domain"/>
    <property type="match status" value="1"/>
</dbReference>
<dbReference type="SUPFAM" id="SSF51735">
    <property type="entry name" value="NAD(P)-binding Rossmann-fold domains"/>
    <property type="match status" value="1"/>
</dbReference>
<reference key="1">
    <citation type="journal article" date="2008" name="J. Bacteriol.">
        <title>Genome sequence of the fish pathogen Renibacterium salmoninarum suggests reductive evolution away from an environmental Arthrobacter ancestor.</title>
        <authorList>
            <person name="Wiens G.D."/>
            <person name="Rockey D.D."/>
            <person name="Wu Z."/>
            <person name="Chang J."/>
            <person name="Levy R."/>
            <person name="Crane S."/>
            <person name="Chen D.S."/>
            <person name="Capri G.R."/>
            <person name="Burnett J.R."/>
            <person name="Sudheesh P.S."/>
            <person name="Schipma M.J."/>
            <person name="Burd H."/>
            <person name="Bhattacharyya A."/>
            <person name="Rhodes L.D."/>
            <person name="Kaul R."/>
            <person name="Strom M.S."/>
        </authorList>
    </citation>
    <scope>NUCLEOTIDE SEQUENCE [LARGE SCALE GENOMIC DNA]</scope>
    <source>
        <strain>ATCC 33209 / DSM 20767 / JCM 11484 / NBRC 15589 / NCIMB 2235</strain>
    </source>
</reference>